<name>FLAK_METM6</name>
<sequence length="230" mass="26021">MIEYIIGALGLIIASVQDFRSREIEDYIWIFLAVFGVLFAIYSSITLLDYSILINSISGFVICFILGYMMFLSGIGGGDGKMLIGLGALVPKFQMPIYTSLGTLLNLNYVPTFPIMVFINGIFFMVFLPFVILFRNILNGARPKTGKEFILMFFGEKMKVNVAKEQKRLIMGQNDKINFFPAADDEDFSKYSNNEEIWVTPQIPLIIPITLSYLVTPIIGDRILDFLIPF</sequence>
<protein>
    <recommendedName>
        <fullName>Preflagellin peptidase</fullName>
        <shortName>PFP</shortName>
        <ecNumber>3.4.23.52</ecNumber>
    </recommendedName>
</protein>
<keyword id="KW-0002">3D-structure</keyword>
<keyword id="KW-1209">Archaeal flagellum biogenesis</keyword>
<keyword id="KW-1003">Cell membrane</keyword>
<keyword id="KW-0378">Hydrolase</keyword>
<keyword id="KW-0472">Membrane</keyword>
<keyword id="KW-0645">Protease</keyword>
<keyword id="KW-0812">Transmembrane</keyword>
<keyword id="KW-1133">Transmembrane helix</keyword>
<proteinExistence type="evidence at protein level"/>
<evidence type="ECO:0000250" key="1"/>
<evidence type="ECO:0000269" key="2">
    <source>
    </source>
</evidence>
<evidence type="ECO:0000305" key="3"/>
<accession>A9A677</accession>
<gene>
    <name type="primary">flaK</name>
    <name type="ordered locus">MmarC6_0338</name>
</gene>
<organism>
    <name type="scientific">Methanococcus maripaludis (strain C6 / ATCC BAA-1332)</name>
    <dbReference type="NCBI Taxonomy" id="444158"/>
    <lineage>
        <taxon>Archaea</taxon>
        <taxon>Methanobacteriati</taxon>
        <taxon>Methanobacteriota</taxon>
        <taxon>Methanomada group</taxon>
        <taxon>Methanococci</taxon>
        <taxon>Methanococcales</taxon>
        <taxon>Methanococcaceae</taxon>
        <taxon>Methanococcus</taxon>
    </lineage>
</organism>
<dbReference type="EC" id="3.4.23.52"/>
<dbReference type="EMBL" id="CP000867">
    <property type="protein sequence ID" value="ABX01159.1"/>
    <property type="molecule type" value="Genomic_DNA"/>
</dbReference>
<dbReference type="PDB" id="3S0X">
    <property type="method" value="X-ray"/>
    <property type="resolution" value="3.60 A"/>
    <property type="chains" value="A/B=1-230"/>
</dbReference>
<dbReference type="PDBsum" id="3S0X"/>
<dbReference type="SMR" id="A9A677"/>
<dbReference type="STRING" id="444158.MmarC6_0338"/>
<dbReference type="MEROPS" id="A24.016"/>
<dbReference type="KEGG" id="mmx:MmarC6_0338"/>
<dbReference type="eggNOG" id="arCOG02298">
    <property type="taxonomic scope" value="Archaea"/>
</dbReference>
<dbReference type="HOGENOM" id="CLU_1197648_0_0_2"/>
<dbReference type="OrthoDB" id="19094at2157"/>
<dbReference type="BRENDA" id="3.4.23.52">
    <property type="organism ID" value="3262"/>
</dbReference>
<dbReference type="EvolutionaryTrace" id="A9A677"/>
<dbReference type="GO" id="GO:0005886">
    <property type="term" value="C:plasma membrane"/>
    <property type="evidence" value="ECO:0007669"/>
    <property type="project" value="UniProtKB-SubCell"/>
</dbReference>
<dbReference type="GO" id="GO:0004190">
    <property type="term" value="F:aspartic-type endopeptidase activity"/>
    <property type="evidence" value="ECO:0007669"/>
    <property type="project" value="InterPro"/>
</dbReference>
<dbReference type="GO" id="GO:0006508">
    <property type="term" value="P:proteolysis"/>
    <property type="evidence" value="ECO:0007669"/>
    <property type="project" value="UniProtKB-KW"/>
</dbReference>
<dbReference type="Gene3D" id="1.20.120.1220">
    <property type="match status" value="1"/>
</dbReference>
<dbReference type="Gene3D" id="6.10.250.3240">
    <property type="match status" value="1"/>
</dbReference>
<dbReference type="InterPro" id="IPR054964">
    <property type="entry name" value="Arch_preflagellin_pept"/>
</dbReference>
<dbReference type="InterPro" id="IPR052218">
    <property type="entry name" value="Preflagellin_Peptidase"/>
</dbReference>
<dbReference type="InterPro" id="IPR009655">
    <property type="entry name" value="Preflagellin_peptidase_C"/>
</dbReference>
<dbReference type="InterPro" id="IPR000045">
    <property type="entry name" value="Prepilin_IV_endopep_pep"/>
</dbReference>
<dbReference type="NCBIfam" id="NF040695">
    <property type="entry name" value="FlaK_Arch"/>
    <property type="match status" value="1"/>
</dbReference>
<dbReference type="PANTHER" id="PTHR36506">
    <property type="entry name" value="PREFLAGELLIN PEPTIDASE"/>
    <property type="match status" value="1"/>
</dbReference>
<dbReference type="PANTHER" id="PTHR36506:SF1">
    <property type="entry name" value="PREFLAGELLIN PEPTIDASE"/>
    <property type="match status" value="1"/>
</dbReference>
<dbReference type="Pfam" id="PF06847">
    <property type="entry name" value="Arc_PepC_II"/>
    <property type="match status" value="1"/>
</dbReference>
<dbReference type="Pfam" id="PF01478">
    <property type="entry name" value="Peptidase_A24"/>
    <property type="match status" value="1"/>
</dbReference>
<feature type="chain" id="PRO_0000419277" description="Preflagellin peptidase">
    <location>
        <begin position="1"/>
        <end position="230"/>
    </location>
</feature>
<feature type="topological domain" description="Cytoplasmic" evidence="3">
    <location>
        <position position="1"/>
    </location>
</feature>
<feature type="transmembrane region" description="Helical" evidence="3">
    <location>
        <begin position="2"/>
        <end position="18"/>
    </location>
</feature>
<feature type="topological domain" description="Extracellular" evidence="3">
    <location>
        <begin position="19"/>
        <end position="23"/>
    </location>
</feature>
<feature type="transmembrane region" description="Helical" evidence="3">
    <location>
        <begin position="24"/>
        <end position="46"/>
    </location>
</feature>
<feature type="topological domain" description="Cytoplasmic" evidence="3">
    <location>
        <begin position="47"/>
        <end position="49"/>
    </location>
</feature>
<feature type="transmembrane region" description="Helical" evidence="3">
    <location>
        <begin position="50"/>
        <end position="72"/>
    </location>
</feature>
<feature type="topological domain" description="Extracellular" evidence="3">
    <location>
        <begin position="73"/>
        <end position="78"/>
    </location>
</feature>
<feature type="transmembrane region" description="Helical" evidence="3">
    <location>
        <begin position="79"/>
        <end position="89"/>
    </location>
</feature>
<feature type="topological domain" description="Cytoplasmic" evidence="3">
    <location>
        <begin position="90"/>
        <end position="110"/>
    </location>
</feature>
<feature type="transmembrane region" description="Helical" evidence="3">
    <location>
        <begin position="111"/>
        <end position="139"/>
    </location>
</feature>
<feature type="topological domain" description="Extracellular" evidence="3">
    <location>
        <begin position="140"/>
        <end position="204"/>
    </location>
</feature>
<feature type="transmembrane region" description="Helical" evidence="3">
    <location>
        <begin position="205"/>
        <end position="216"/>
    </location>
</feature>
<feature type="topological domain" description="Cytoplasmic" evidence="3">
    <location>
        <begin position="217"/>
        <end position="230"/>
    </location>
</feature>
<feature type="site" description="Essential for catalysis" evidence="1">
    <location>
        <position position="18"/>
    </location>
</feature>
<feature type="site" description="Essential for catalysis" evidence="1">
    <location>
        <position position="79"/>
    </location>
</feature>
<feature type="mutagenesis site" description="No effect on proteolytic activity." evidence="2">
    <original>E</original>
    <variation>A</variation>
    <location>
        <position position="23"/>
    </location>
</feature>
<feature type="mutagenesis site" description="No effect on proteolytic activity." evidence="2">
    <original>E</original>
    <variation>A</variation>
    <location>
        <position position="25"/>
    </location>
</feature>
<feature type="mutagenesis site" description="No effect on proteolytic activity." evidence="2">
    <original>D</original>
    <variation>A</variation>
    <location>
        <position position="26"/>
    </location>
</feature>
<feature type="mutagenesis site" description="Large reduction in proteolytic activity." evidence="2">
    <original>G</original>
    <variation>A</variation>
    <location>
        <position position="76"/>
    </location>
</feature>
<feature type="mutagenesis site" description="No effect on proteolytic activity." evidence="2">
    <original>G</original>
    <variation>A</variation>
    <location>
        <position position="77"/>
    </location>
</feature>
<feature type="mutagenesis site" description="No effect on proteolytic activity." evidence="2">
    <original>G</original>
    <variation>A</variation>
    <location>
        <position position="78"/>
    </location>
</feature>
<feature type="mutagenesis site" description="Enhanced proteolytic activity." evidence="2">
    <original>P</original>
    <variation>A</variation>
    <location>
        <position position="208"/>
    </location>
</feature>
<reference key="1">
    <citation type="submission" date="2007-10" db="EMBL/GenBank/DDBJ databases">
        <title>Complete sequence of Methanococcus maripaludis C6.</title>
        <authorList>
            <consortium name="US DOE Joint Genome Institute"/>
            <person name="Copeland A."/>
            <person name="Lucas S."/>
            <person name="Lapidus A."/>
            <person name="Barry K."/>
            <person name="Glavina del Rio T."/>
            <person name="Dalin E."/>
            <person name="Tice H."/>
            <person name="Pitluck S."/>
            <person name="Clum A."/>
            <person name="Schmutz J."/>
            <person name="Larimer F."/>
            <person name="Land M."/>
            <person name="Hauser L."/>
            <person name="Kyrpides N."/>
            <person name="Mikhailova N."/>
            <person name="Sieprawska-Lupa M."/>
            <person name="Whitman W.B."/>
            <person name="Richardson P."/>
        </authorList>
    </citation>
    <scope>NUCLEOTIDE SEQUENCE [LARGE SCALE GENOMIC DNA]</scope>
    <source>
        <strain>C6 / ATCC BAA-1332</strain>
    </source>
</reference>
<reference key="2">
    <citation type="journal article" date="2011" name="Nature">
        <title>The crystal structure of GXGD membrane protease FlaK.</title>
        <authorList>
            <person name="Hu J."/>
            <person name="Xue Y."/>
            <person name="Lee S."/>
            <person name="Ha Y."/>
        </authorList>
    </citation>
    <scope>X-RAY CRYSTALLOGRAPHY (3.60 ANGSTROMS)</scope>
    <scope>FUNCTION</scope>
    <scope>CATALYTIC ACTIVITY</scope>
    <scope>SUBCELLULAR LOCATION</scope>
    <scope>MUTAGENESIS OF GLU-23; GLU-25; ASP-26; GLY-76; GLY-77; GLY-78 AND PRO-208</scope>
    <source>
        <strain>C6 / ATCC BAA-1332</strain>
    </source>
</reference>
<comment type="function">
    <text evidence="2">Cleaves the N-terminal leader peptide from preflagellins.</text>
</comment>
<comment type="catalytic activity">
    <reaction evidence="2">
        <text>Cleaves the signal peptide of 3 to 12 amino acids from the N-terminal of preflagellin, usually at Arg-Gly-|- or Lys-Gly-|-, to release flagellin.</text>
        <dbReference type="EC" id="3.4.23.52"/>
    </reaction>
</comment>
<comment type="subcellular location">
    <subcellularLocation>
        <location evidence="2">Cell membrane</location>
        <topology evidence="2">Multi-pass membrane protein</topology>
    </subcellularLocation>
</comment>
<comment type="similarity">
    <text evidence="3">Belongs to the peptidase A24 family. Archaeal preflagellin peptidase subfamily.</text>
</comment>